<proteinExistence type="inferred from homology"/>
<accession>A5FRQ1</accession>
<keyword id="KW-0066">ATP synthesis</keyword>
<keyword id="KW-1003">Cell membrane</keyword>
<keyword id="KW-0138">CF(0)</keyword>
<keyword id="KW-0375">Hydrogen ion transport</keyword>
<keyword id="KW-0406">Ion transport</keyword>
<keyword id="KW-0472">Membrane</keyword>
<keyword id="KW-0812">Transmembrane</keyword>
<keyword id="KW-1133">Transmembrane helix</keyword>
<keyword id="KW-0813">Transport</keyword>
<evidence type="ECO:0000255" key="1">
    <source>
        <dbReference type="HAMAP-Rule" id="MF_01398"/>
    </source>
</evidence>
<feature type="chain" id="PRO_0000368453" description="ATP synthase subunit b">
    <location>
        <begin position="1"/>
        <end position="169"/>
    </location>
</feature>
<feature type="transmembrane region" description="Helical" evidence="1">
    <location>
        <begin position="11"/>
        <end position="31"/>
    </location>
</feature>
<gene>
    <name evidence="1" type="primary">atpF</name>
    <name type="ordered locus">DehaBAV1_0534</name>
</gene>
<reference key="1">
    <citation type="submission" date="2007-05" db="EMBL/GenBank/DDBJ databases">
        <title>Complete sequence of Dehalococcoides sp. BAV1.</title>
        <authorList>
            <consortium name="US DOE Joint Genome Institute"/>
            <person name="Copeland A."/>
            <person name="Lucas S."/>
            <person name="Lapidus A."/>
            <person name="Barry K."/>
            <person name="Detter J.C."/>
            <person name="Glavina del Rio T."/>
            <person name="Hammon N."/>
            <person name="Israni S."/>
            <person name="Pitluck S."/>
            <person name="Lowry S."/>
            <person name="Clum A."/>
            <person name="Schmutz J."/>
            <person name="Larimer F."/>
            <person name="Land M."/>
            <person name="Hauser L."/>
            <person name="Kyrpides N."/>
            <person name="Kim E."/>
            <person name="Ritalahti K.M."/>
            <person name="Loeffler F."/>
            <person name="Richardson P."/>
        </authorList>
    </citation>
    <scope>NUCLEOTIDE SEQUENCE [LARGE SCALE GENOMIC DNA]</scope>
    <source>
        <strain>ATCC BAA-2100 / JCM 16839 / KCTC 5957 / BAV1</strain>
    </source>
</reference>
<comment type="function">
    <text evidence="1">F(1)F(0) ATP synthase produces ATP from ADP in the presence of a proton or sodium gradient. F-type ATPases consist of two structural domains, F(1) containing the extramembraneous catalytic core and F(0) containing the membrane proton channel, linked together by a central stalk and a peripheral stalk. During catalysis, ATP synthesis in the catalytic domain of F(1) is coupled via a rotary mechanism of the central stalk subunits to proton translocation.</text>
</comment>
<comment type="function">
    <text evidence="1">Component of the F(0) channel, it forms part of the peripheral stalk, linking F(1) to F(0).</text>
</comment>
<comment type="subunit">
    <text evidence="1">F-type ATPases have 2 components, F(1) - the catalytic core - and F(0) - the membrane proton channel. F(1) has five subunits: alpha(3), beta(3), gamma(1), delta(1), epsilon(1). F(0) has three main subunits: a(1), b(2) and c(10-14). The alpha and beta chains form an alternating ring which encloses part of the gamma chain. F(1) is attached to F(0) by a central stalk formed by the gamma and epsilon chains, while a peripheral stalk is formed by the delta and b chains.</text>
</comment>
<comment type="subcellular location">
    <subcellularLocation>
        <location evidence="1">Cell membrane</location>
        <topology evidence="1">Single-pass membrane protein</topology>
    </subcellularLocation>
</comment>
<comment type="similarity">
    <text evidence="1">Belongs to the ATPase B chain family.</text>
</comment>
<protein>
    <recommendedName>
        <fullName evidence="1">ATP synthase subunit b</fullName>
    </recommendedName>
    <alternativeName>
        <fullName evidence="1">ATP synthase F(0) sector subunit b</fullName>
    </alternativeName>
    <alternativeName>
        <fullName evidence="1">ATPase subunit I</fullName>
    </alternativeName>
    <alternativeName>
        <fullName evidence="1">F-type ATPase subunit b</fullName>
        <shortName evidence="1">F-ATPase subunit b</shortName>
    </alternativeName>
</protein>
<sequence length="169" mass="19153">MEKLAELGINIPSFIAQIVNFGLLLGLLYLFAYKPILAKLDERSTRIKESMERTDQVKEQAQKAEEEFKKKIGEASQQGQLVIERAVKTGDEIRQKAIEEAKAEAEAMLSRARTEIRQERDEVVDQLRKEFAELTILAAGKVIDQSLDKKAHQALIDSVLENSTDLRKN</sequence>
<name>ATPF_DEHMB</name>
<dbReference type="EMBL" id="CP000688">
    <property type="protein sequence ID" value="ABQ17119.1"/>
    <property type="molecule type" value="Genomic_DNA"/>
</dbReference>
<dbReference type="SMR" id="A5FRQ1"/>
<dbReference type="KEGG" id="deb:DehaBAV1_0534"/>
<dbReference type="PATRIC" id="fig|216389.18.peg.579"/>
<dbReference type="HOGENOM" id="CLU_079215_4_4_0"/>
<dbReference type="GO" id="GO:0005886">
    <property type="term" value="C:plasma membrane"/>
    <property type="evidence" value="ECO:0007669"/>
    <property type="project" value="UniProtKB-SubCell"/>
</dbReference>
<dbReference type="GO" id="GO:0045259">
    <property type="term" value="C:proton-transporting ATP synthase complex"/>
    <property type="evidence" value="ECO:0007669"/>
    <property type="project" value="UniProtKB-KW"/>
</dbReference>
<dbReference type="GO" id="GO:0046933">
    <property type="term" value="F:proton-transporting ATP synthase activity, rotational mechanism"/>
    <property type="evidence" value="ECO:0007669"/>
    <property type="project" value="UniProtKB-UniRule"/>
</dbReference>
<dbReference type="GO" id="GO:0046961">
    <property type="term" value="F:proton-transporting ATPase activity, rotational mechanism"/>
    <property type="evidence" value="ECO:0007669"/>
    <property type="project" value="TreeGrafter"/>
</dbReference>
<dbReference type="CDD" id="cd06503">
    <property type="entry name" value="ATP-synt_Fo_b"/>
    <property type="match status" value="1"/>
</dbReference>
<dbReference type="Gene3D" id="1.20.5.620">
    <property type="entry name" value="F1F0 ATP synthase subunit B, membrane domain"/>
    <property type="match status" value="1"/>
</dbReference>
<dbReference type="HAMAP" id="MF_01398">
    <property type="entry name" value="ATP_synth_b_bprime"/>
    <property type="match status" value="1"/>
</dbReference>
<dbReference type="InterPro" id="IPR028987">
    <property type="entry name" value="ATP_synth_B-like_membr_sf"/>
</dbReference>
<dbReference type="InterPro" id="IPR002146">
    <property type="entry name" value="ATP_synth_b/b'su_bac/chlpt"/>
</dbReference>
<dbReference type="InterPro" id="IPR005864">
    <property type="entry name" value="ATP_synth_F0_bsu_bac"/>
</dbReference>
<dbReference type="InterPro" id="IPR050059">
    <property type="entry name" value="ATP_synthase_B_chain"/>
</dbReference>
<dbReference type="NCBIfam" id="TIGR01144">
    <property type="entry name" value="ATP_synt_b"/>
    <property type="match status" value="1"/>
</dbReference>
<dbReference type="PANTHER" id="PTHR33445:SF1">
    <property type="entry name" value="ATP SYNTHASE SUBUNIT B"/>
    <property type="match status" value="1"/>
</dbReference>
<dbReference type="PANTHER" id="PTHR33445">
    <property type="entry name" value="ATP SYNTHASE SUBUNIT B', CHLOROPLASTIC"/>
    <property type="match status" value="1"/>
</dbReference>
<dbReference type="Pfam" id="PF00430">
    <property type="entry name" value="ATP-synt_B"/>
    <property type="match status" value="1"/>
</dbReference>
<dbReference type="SUPFAM" id="SSF81573">
    <property type="entry name" value="F1F0 ATP synthase subunit B, membrane domain"/>
    <property type="match status" value="1"/>
</dbReference>
<organism>
    <name type="scientific">Dehalococcoides mccartyi (strain ATCC BAA-2100 / JCM 16839 / KCTC 5957 / BAV1)</name>
    <dbReference type="NCBI Taxonomy" id="216389"/>
    <lineage>
        <taxon>Bacteria</taxon>
        <taxon>Bacillati</taxon>
        <taxon>Chloroflexota</taxon>
        <taxon>Dehalococcoidia</taxon>
        <taxon>Dehalococcoidales</taxon>
        <taxon>Dehalococcoidaceae</taxon>
        <taxon>Dehalococcoides</taxon>
    </lineage>
</organism>